<keyword id="KW-0464">Manganese</keyword>
<keyword id="KW-0479">Metal-binding</keyword>
<keyword id="KW-0560">Oxidoreductase</keyword>
<keyword id="KW-1185">Reference proteome</keyword>
<gene>
    <name type="primary">sodA1</name>
    <name type="ordered locus">BC_4272</name>
</gene>
<accession>Q818I1</accession>
<name>SODM1_BACCR</name>
<proteinExistence type="inferred from homology"/>
<feature type="chain" id="PRO_0000160015" description="Superoxide dismutase [Mn] 1">
    <location>
        <begin position="1"/>
        <end position="218"/>
    </location>
</feature>
<feature type="binding site" evidence="1">
    <location>
        <position position="43"/>
    </location>
    <ligand>
        <name>Mn(2+)</name>
        <dbReference type="ChEBI" id="CHEBI:29035"/>
    </ligand>
</feature>
<feature type="binding site" evidence="1">
    <location>
        <position position="98"/>
    </location>
    <ligand>
        <name>Mn(2+)</name>
        <dbReference type="ChEBI" id="CHEBI:29035"/>
    </ligand>
</feature>
<feature type="binding site" evidence="1">
    <location>
        <position position="180"/>
    </location>
    <ligand>
        <name>Mn(2+)</name>
        <dbReference type="ChEBI" id="CHEBI:29035"/>
    </ligand>
</feature>
<feature type="binding site" evidence="1">
    <location>
        <position position="184"/>
    </location>
    <ligand>
        <name>Mn(2+)</name>
        <dbReference type="ChEBI" id="CHEBI:29035"/>
    </ligand>
</feature>
<comment type="function">
    <text>Destroys superoxide anion radicals which are normally produced within the cells and which are toxic to biological systems.</text>
</comment>
<comment type="catalytic activity">
    <reaction>
        <text>2 superoxide + 2 H(+) = H2O2 + O2</text>
        <dbReference type="Rhea" id="RHEA:20696"/>
        <dbReference type="ChEBI" id="CHEBI:15378"/>
        <dbReference type="ChEBI" id="CHEBI:15379"/>
        <dbReference type="ChEBI" id="CHEBI:16240"/>
        <dbReference type="ChEBI" id="CHEBI:18421"/>
        <dbReference type="EC" id="1.15.1.1"/>
    </reaction>
</comment>
<comment type="cofactor">
    <cofactor evidence="1">
        <name>Mn(2+)</name>
        <dbReference type="ChEBI" id="CHEBI:29035"/>
    </cofactor>
    <text evidence="1">Binds 1 Mn(2+) ion per subunit.</text>
</comment>
<comment type="subunit">
    <text evidence="1">Homodimer.</text>
</comment>
<comment type="similarity">
    <text evidence="2">Belongs to the iron/manganese superoxide dismutase family.</text>
</comment>
<protein>
    <recommendedName>
        <fullName>Superoxide dismutase [Mn] 1</fullName>
        <ecNumber>1.15.1.1</ecNumber>
    </recommendedName>
</protein>
<sequence>MSLKWQYINWEEYNNGKTRIYQIYPYAYDALEPHFDKETMNIHHTKHHNTYITNLNAALEGHAELADKSVEELVANLNEVPEAIRTAVRNNGGGHANHTFFWTILSPNGGGQPVGELATAIEAKFGSFDAFKEEFAKAGATRFGSGWAWLVVNNGELEVTSTPNQDSPLTEGKTPVIGLDVWEHAYYLNYQNRRPDYIGAFWNVVDWNAAEKRYQEAK</sequence>
<organism>
    <name type="scientific">Bacillus cereus (strain ATCC 14579 / DSM 31 / CCUG 7414 / JCM 2152 / NBRC 15305 / NCIMB 9373 / NCTC 2599 / NRRL B-3711)</name>
    <dbReference type="NCBI Taxonomy" id="226900"/>
    <lineage>
        <taxon>Bacteria</taxon>
        <taxon>Bacillati</taxon>
        <taxon>Bacillota</taxon>
        <taxon>Bacilli</taxon>
        <taxon>Bacillales</taxon>
        <taxon>Bacillaceae</taxon>
        <taxon>Bacillus</taxon>
        <taxon>Bacillus cereus group</taxon>
    </lineage>
</organism>
<reference key="1">
    <citation type="journal article" date="2003" name="Nature">
        <title>Genome sequence of Bacillus cereus and comparative analysis with Bacillus anthracis.</title>
        <authorList>
            <person name="Ivanova N."/>
            <person name="Sorokin A."/>
            <person name="Anderson I."/>
            <person name="Galleron N."/>
            <person name="Candelon B."/>
            <person name="Kapatral V."/>
            <person name="Bhattacharyya A."/>
            <person name="Reznik G."/>
            <person name="Mikhailova N."/>
            <person name="Lapidus A."/>
            <person name="Chu L."/>
            <person name="Mazur M."/>
            <person name="Goltsman E."/>
            <person name="Larsen N."/>
            <person name="D'Souza M."/>
            <person name="Walunas T."/>
            <person name="Grechkin Y."/>
            <person name="Pusch G."/>
            <person name="Haselkorn R."/>
            <person name="Fonstein M."/>
            <person name="Ehrlich S.D."/>
            <person name="Overbeek R."/>
            <person name="Kyrpides N.C."/>
        </authorList>
    </citation>
    <scope>NUCLEOTIDE SEQUENCE [LARGE SCALE GENOMIC DNA]</scope>
    <source>
        <strain>ATCC 14579 / DSM 31 / CCUG 7414 / JCM 2152 / NBRC 15305 / NCIMB 9373 / NCTC 2599 / NRRL B-3711</strain>
    </source>
</reference>
<dbReference type="EC" id="1.15.1.1"/>
<dbReference type="EMBL" id="AE016877">
    <property type="protein sequence ID" value="AAP11187.1"/>
    <property type="molecule type" value="Genomic_DNA"/>
</dbReference>
<dbReference type="RefSeq" id="NP_833986.1">
    <property type="nucleotide sequence ID" value="NC_004722.1"/>
</dbReference>
<dbReference type="RefSeq" id="WP_000054174.1">
    <property type="nucleotide sequence ID" value="NC_004722.1"/>
</dbReference>
<dbReference type="SMR" id="Q818I1"/>
<dbReference type="STRING" id="226900.BC_4272"/>
<dbReference type="KEGG" id="bce:BC4272"/>
<dbReference type="PATRIC" id="fig|226900.8.peg.4416"/>
<dbReference type="HOGENOM" id="CLU_031625_0_1_9"/>
<dbReference type="Proteomes" id="UP000001417">
    <property type="component" value="Chromosome"/>
</dbReference>
<dbReference type="GO" id="GO:0005737">
    <property type="term" value="C:cytoplasm"/>
    <property type="evidence" value="ECO:0000318"/>
    <property type="project" value="GO_Central"/>
</dbReference>
<dbReference type="GO" id="GO:0046872">
    <property type="term" value="F:metal ion binding"/>
    <property type="evidence" value="ECO:0007669"/>
    <property type="project" value="UniProtKB-KW"/>
</dbReference>
<dbReference type="GO" id="GO:0004784">
    <property type="term" value="F:superoxide dismutase activity"/>
    <property type="evidence" value="ECO:0000318"/>
    <property type="project" value="GO_Central"/>
</dbReference>
<dbReference type="GO" id="GO:0019430">
    <property type="term" value="P:removal of superoxide radicals"/>
    <property type="evidence" value="ECO:0000318"/>
    <property type="project" value="GO_Central"/>
</dbReference>
<dbReference type="FunFam" id="1.10.287.990:FF:000001">
    <property type="entry name" value="Superoxide dismutase"/>
    <property type="match status" value="1"/>
</dbReference>
<dbReference type="FunFam" id="3.55.40.20:FF:000001">
    <property type="entry name" value="Superoxide dismutase"/>
    <property type="match status" value="1"/>
</dbReference>
<dbReference type="Gene3D" id="1.10.287.990">
    <property type="entry name" value="Fe,Mn superoxide dismutase (SOD) domain"/>
    <property type="match status" value="1"/>
</dbReference>
<dbReference type="Gene3D" id="3.55.40.20">
    <property type="entry name" value="Iron/manganese superoxide dismutase, C-terminal domain"/>
    <property type="match status" value="1"/>
</dbReference>
<dbReference type="InterPro" id="IPR001189">
    <property type="entry name" value="Mn/Fe_SOD"/>
</dbReference>
<dbReference type="InterPro" id="IPR019833">
    <property type="entry name" value="Mn/Fe_SOD_BS"/>
</dbReference>
<dbReference type="InterPro" id="IPR019832">
    <property type="entry name" value="Mn/Fe_SOD_C"/>
</dbReference>
<dbReference type="InterPro" id="IPR019831">
    <property type="entry name" value="Mn/Fe_SOD_N"/>
</dbReference>
<dbReference type="InterPro" id="IPR036324">
    <property type="entry name" value="Mn/Fe_SOD_N_sf"/>
</dbReference>
<dbReference type="InterPro" id="IPR036314">
    <property type="entry name" value="SOD_C_sf"/>
</dbReference>
<dbReference type="PANTHER" id="PTHR43595">
    <property type="entry name" value="37S RIBOSOMAL PROTEIN S26, MITOCHONDRIAL"/>
    <property type="match status" value="1"/>
</dbReference>
<dbReference type="PANTHER" id="PTHR43595:SF2">
    <property type="entry name" value="SMALL RIBOSOMAL SUBUNIT PROTEIN MS42"/>
    <property type="match status" value="1"/>
</dbReference>
<dbReference type="Pfam" id="PF02777">
    <property type="entry name" value="Sod_Fe_C"/>
    <property type="match status" value="1"/>
</dbReference>
<dbReference type="Pfam" id="PF00081">
    <property type="entry name" value="Sod_Fe_N"/>
    <property type="match status" value="1"/>
</dbReference>
<dbReference type="PIRSF" id="PIRSF000349">
    <property type="entry name" value="SODismutase"/>
    <property type="match status" value="1"/>
</dbReference>
<dbReference type="PRINTS" id="PR01703">
    <property type="entry name" value="MNSODISMTASE"/>
</dbReference>
<dbReference type="SUPFAM" id="SSF54719">
    <property type="entry name" value="Fe,Mn superoxide dismutase (SOD), C-terminal domain"/>
    <property type="match status" value="1"/>
</dbReference>
<dbReference type="SUPFAM" id="SSF46609">
    <property type="entry name" value="Fe,Mn superoxide dismutase (SOD), N-terminal domain"/>
    <property type="match status" value="1"/>
</dbReference>
<dbReference type="PROSITE" id="PS00088">
    <property type="entry name" value="SOD_MN"/>
    <property type="match status" value="1"/>
</dbReference>
<evidence type="ECO:0000250" key="1"/>
<evidence type="ECO:0000305" key="2"/>